<name>AATE_METTH</name>
<feature type="chain" id="PRO_0000117319" description="A-type ATP synthase subunit E">
    <location>
        <begin position="1"/>
        <end position="206"/>
    </location>
</feature>
<accession>O27039</accession>
<dbReference type="EMBL" id="AE000666">
    <property type="protein sequence ID" value="AAB85454.1"/>
    <property type="molecule type" value="Genomic_DNA"/>
</dbReference>
<dbReference type="PIR" id="B69228">
    <property type="entry name" value="B69228"/>
</dbReference>
<dbReference type="RefSeq" id="WP_010876589.1">
    <property type="nucleotide sequence ID" value="NC_000916.1"/>
</dbReference>
<dbReference type="SMR" id="O27039"/>
<dbReference type="FunCoup" id="O27039">
    <property type="interactions" value="13"/>
</dbReference>
<dbReference type="IntAct" id="O27039">
    <property type="interactions" value="1"/>
</dbReference>
<dbReference type="STRING" id="187420.MTH_958"/>
<dbReference type="PaxDb" id="187420-MTH_958"/>
<dbReference type="EnsemblBacteria" id="AAB85454">
    <property type="protein sequence ID" value="AAB85454"/>
    <property type="gene ID" value="MTH_958"/>
</dbReference>
<dbReference type="KEGG" id="mth:MTH_958"/>
<dbReference type="PATRIC" id="fig|187420.15.peg.941"/>
<dbReference type="HOGENOM" id="CLU_105846_1_0_2"/>
<dbReference type="InParanoid" id="O27039"/>
<dbReference type="Proteomes" id="UP000005223">
    <property type="component" value="Chromosome"/>
</dbReference>
<dbReference type="GO" id="GO:0005886">
    <property type="term" value="C:plasma membrane"/>
    <property type="evidence" value="ECO:0007669"/>
    <property type="project" value="UniProtKB-SubCell"/>
</dbReference>
<dbReference type="GO" id="GO:0033178">
    <property type="term" value="C:proton-transporting two-sector ATPase complex, catalytic domain"/>
    <property type="evidence" value="ECO:0007669"/>
    <property type="project" value="InterPro"/>
</dbReference>
<dbReference type="GO" id="GO:0005524">
    <property type="term" value="F:ATP binding"/>
    <property type="evidence" value="ECO:0007669"/>
    <property type="project" value="UniProtKB-UniRule"/>
</dbReference>
<dbReference type="GO" id="GO:0046933">
    <property type="term" value="F:proton-transporting ATP synthase activity, rotational mechanism"/>
    <property type="evidence" value="ECO:0007669"/>
    <property type="project" value="UniProtKB-UniRule"/>
</dbReference>
<dbReference type="GO" id="GO:0046961">
    <property type="term" value="F:proton-transporting ATPase activity, rotational mechanism"/>
    <property type="evidence" value="ECO:0007669"/>
    <property type="project" value="InterPro"/>
</dbReference>
<dbReference type="GO" id="GO:0042777">
    <property type="term" value="P:proton motive force-driven plasma membrane ATP synthesis"/>
    <property type="evidence" value="ECO:0007669"/>
    <property type="project" value="UniProtKB-UniRule"/>
</dbReference>
<dbReference type="Gene3D" id="3.30.2320.30">
    <property type="entry name" value="ATP synthase, E subunit, C-terminal"/>
    <property type="match status" value="1"/>
</dbReference>
<dbReference type="Gene3D" id="1.20.5.620">
    <property type="entry name" value="F1F0 ATP synthase subunit B, membrane domain"/>
    <property type="match status" value="1"/>
</dbReference>
<dbReference type="HAMAP" id="MF_00311">
    <property type="entry name" value="ATP_synth_E_arch"/>
    <property type="match status" value="1"/>
</dbReference>
<dbReference type="InterPro" id="IPR028987">
    <property type="entry name" value="ATP_synth_B-like_membr_sf"/>
</dbReference>
<dbReference type="InterPro" id="IPR038495">
    <property type="entry name" value="ATPase_E_C"/>
</dbReference>
<dbReference type="InterPro" id="IPR002842">
    <property type="entry name" value="ATPase_V1_Esu"/>
</dbReference>
<dbReference type="PANTHER" id="PTHR45715">
    <property type="entry name" value="ATPASE H+-TRANSPORTING V1 SUBUNIT E1A-RELATED"/>
    <property type="match status" value="1"/>
</dbReference>
<dbReference type="Pfam" id="PF01991">
    <property type="entry name" value="vATP-synt_E"/>
    <property type="match status" value="1"/>
</dbReference>
<dbReference type="SUPFAM" id="SSF81573">
    <property type="entry name" value="F1F0 ATP synthase subunit B, membrane domain"/>
    <property type="match status" value="1"/>
</dbReference>
<dbReference type="SUPFAM" id="SSF160527">
    <property type="entry name" value="V-type ATPase subunit E-like"/>
    <property type="match status" value="1"/>
</dbReference>
<protein>
    <recommendedName>
        <fullName evidence="1">A-type ATP synthase subunit E</fullName>
    </recommendedName>
</protein>
<proteinExistence type="inferred from homology"/>
<sequence length="206" mass="22665">MSSGAEKIVSSIMSEAQAKADAIIREAEDEAAGIVDEGEKRARMASERILESARKQADMRYQQIISEAKMNARRAELEAREEVIQEAFKKAEEELKNLASTSQEEYVSALRGMIKEAAVEIGGGDLVVSMREDDRSLDLGLDKIAAEVEAETGKKTTLKVGDSIRTIGGAVVRTEDGLIEVNNTIEARMSRFRKALRSEVARVLFE</sequence>
<organism>
    <name type="scientific">Methanothermobacter thermautotrophicus (strain ATCC 29096 / DSM 1053 / JCM 10044 / NBRC 100330 / Delta H)</name>
    <name type="common">Methanobacterium thermoautotrophicum</name>
    <dbReference type="NCBI Taxonomy" id="187420"/>
    <lineage>
        <taxon>Archaea</taxon>
        <taxon>Methanobacteriati</taxon>
        <taxon>Methanobacteriota</taxon>
        <taxon>Methanomada group</taxon>
        <taxon>Methanobacteria</taxon>
        <taxon>Methanobacteriales</taxon>
        <taxon>Methanobacteriaceae</taxon>
        <taxon>Methanothermobacter</taxon>
    </lineage>
</organism>
<evidence type="ECO:0000255" key="1">
    <source>
        <dbReference type="HAMAP-Rule" id="MF_00311"/>
    </source>
</evidence>
<comment type="function">
    <text evidence="1">Component of the A-type ATP synthase that produces ATP from ADP in the presence of a proton gradient across the membrane.</text>
</comment>
<comment type="subunit">
    <text evidence="1">Has multiple subunits with at least A(3), B(3), C, D, E, F, H, I and proteolipid K(x).</text>
</comment>
<comment type="subcellular location">
    <subcellularLocation>
        <location evidence="1">Cell membrane</location>
        <topology evidence="1">Peripheral membrane protein</topology>
    </subcellularLocation>
</comment>
<comment type="similarity">
    <text evidence="1">Belongs to the V-ATPase E subunit family.</text>
</comment>
<gene>
    <name evidence="1" type="primary">atpE</name>
    <name type="ordered locus">MTH_958</name>
</gene>
<keyword id="KW-0066">ATP synthesis</keyword>
<keyword id="KW-1003">Cell membrane</keyword>
<keyword id="KW-0375">Hydrogen ion transport</keyword>
<keyword id="KW-0406">Ion transport</keyword>
<keyword id="KW-0472">Membrane</keyword>
<keyword id="KW-1185">Reference proteome</keyword>
<keyword id="KW-0813">Transport</keyword>
<reference key="1">
    <citation type="journal article" date="1997" name="J. Bacteriol.">
        <title>Complete genome sequence of Methanobacterium thermoautotrophicum deltaH: functional analysis and comparative genomics.</title>
        <authorList>
            <person name="Smith D.R."/>
            <person name="Doucette-Stamm L.A."/>
            <person name="Deloughery C."/>
            <person name="Lee H.-M."/>
            <person name="Dubois J."/>
            <person name="Aldredge T."/>
            <person name="Bashirzadeh R."/>
            <person name="Blakely D."/>
            <person name="Cook R."/>
            <person name="Gilbert K."/>
            <person name="Harrison D."/>
            <person name="Hoang L."/>
            <person name="Keagle P."/>
            <person name="Lumm W."/>
            <person name="Pothier B."/>
            <person name="Qiu D."/>
            <person name="Spadafora R."/>
            <person name="Vicare R."/>
            <person name="Wang Y."/>
            <person name="Wierzbowski J."/>
            <person name="Gibson R."/>
            <person name="Jiwani N."/>
            <person name="Caruso A."/>
            <person name="Bush D."/>
            <person name="Safer H."/>
            <person name="Patwell D."/>
            <person name="Prabhakar S."/>
            <person name="McDougall S."/>
            <person name="Shimer G."/>
            <person name="Goyal A."/>
            <person name="Pietrovski S."/>
            <person name="Church G.M."/>
            <person name="Daniels C.J."/>
            <person name="Mao J.-I."/>
            <person name="Rice P."/>
            <person name="Noelling J."/>
            <person name="Reeve J.N."/>
        </authorList>
    </citation>
    <scope>NUCLEOTIDE SEQUENCE [LARGE SCALE GENOMIC DNA]</scope>
    <source>
        <strain>ATCC 29096 / DSM 1053 / JCM 10044 / NBRC 100330 / Delta H</strain>
    </source>
</reference>